<comment type="function">
    <text evidence="1">Catalyzes the synthesis of 5,6-dihydrouridine (D), a modified base found in the D-loop of most tRNAs, via the reduction of the C5-C6 double bond in target uridines. Specifically modifies U20 and U20a in tRNAs.</text>
</comment>
<comment type="catalytic activity">
    <reaction evidence="1">
        <text>5,6-dihydrouridine(20) in tRNA + NADP(+) = uridine(20) in tRNA + NADPH + H(+)</text>
        <dbReference type="Rhea" id="RHEA:53336"/>
        <dbReference type="Rhea" id="RHEA-COMP:13533"/>
        <dbReference type="Rhea" id="RHEA-COMP:13534"/>
        <dbReference type="ChEBI" id="CHEBI:15378"/>
        <dbReference type="ChEBI" id="CHEBI:57783"/>
        <dbReference type="ChEBI" id="CHEBI:58349"/>
        <dbReference type="ChEBI" id="CHEBI:65315"/>
        <dbReference type="ChEBI" id="CHEBI:74443"/>
        <dbReference type="EC" id="1.3.1.91"/>
    </reaction>
</comment>
<comment type="catalytic activity">
    <reaction evidence="1">
        <text>5,6-dihydrouridine(20) in tRNA + NAD(+) = uridine(20) in tRNA + NADH + H(+)</text>
        <dbReference type="Rhea" id="RHEA:53340"/>
        <dbReference type="Rhea" id="RHEA-COMP:13533"/>
        <dbReference type="Rhea" id="RHEA-COMP:13534"/>
        <dbReference type="ChEBI" id="CHEBI:15378"/>
        <dbReference type="ChEBI" id="CHEBI:57540"/>
        <dbReference type="ChEBI" id="CHEBI:57945"/>
        <dbReference type="ChEBI" id="CHEBI:65315"/>
        <dbReference type="ChEBI" id="CHEBI:74443"/>
        <dbReference type="EC" id="1.3.1.91"/>
    </reaction>
</comment>
<comment type="catalytic activity">
    <reaction evidence="1">
        <text>5,6-dihydrouridine(20a) in tRNA + NADP(+) = uridine(20a) in tRNA + NADPH + H(+)</text>
        <dbReference type="Rhea" id="RHEA:53344"/>
        <dbReference type="Rhea" id="RHEA-COMP:13535"/>
        <dbReference type="Rhea" id="RHEA-COMP:13536"/>
        <dbReference type="ChEBI" id="CHEBI:15378"/>
        <dbReference type="ChEBI" id="CHEBI:57783"/>
        <dbReference type="ChEBI" id="CHEBI:58349"/>
        <dbReference type="ChEBI" id="CHEBI:65315"/>
        <dbReference type="ChEBI" id="CHEBI:74443"/>
    </reaction>
</comment>
<comment type="catalytic activity">
    <reaction evidence="1">
        <text>5,6-dihydrouridine(20a) in tRNA + NAD(+) = uridine(20a) in tRNA + NADH + H(+)</text>
        <dbReference type="Rhea" id="RHEA:53348"/>
        <dbReference type="Rhea" id="RHEA-COMP:13535"/>
        <dbReference type="Rhea" id="RHEA-COMP:13536"/>
        <dbReference type="ChEBI" id="CHEBI:15378"/>
        <dbReference type="ChEBI" id="CHEBI:57540"/>
        <dbReference type="ChEBI" id="CHEBI:57945"/>
        <dbReference type="ChEBI" id="CHEBI:65315"/>
        <dbReference type="ChEBI" id="CHEBI:74443"/>
    </reaction>
</comment>
<comment type="cofactor">
    <cofactor evidence="1">
        <name>FMN</name>
        <dbReference type="ChEBI" id="CHEBI:58210"/>
    </cofactor>
</comment>
<comment type="similarity">
    <text evidence="1">Belongs to the Dus family. DusA subfamily.</text>
</comment>
<name>DUSA_YERPE</name>
<feature type="chain" id="PRO_0000162083" description="tRNA-dihydrouridine(20/20a) synthase">
    <location>
        <begin position="1"/>
        <end position="345"/>
    </location>
</feature>
<feature type="active site" description="Proton donor" evidence="1">
    <location>
        <position position="108"/>
    </location>
</feature>
<feature type="binding site" evidence="1">
    <location>
        <begin position="26"/>
        <end position="28"/>
    </location>
    <ligand>
        <name>FMN</name>
        <dbReference type="ChEBI" id="CHEBI:58210"/>
    </ligand>
</feature>
<feature type="binding site" evidence="1">
    <location>
        <position position="78"/>
    </location>
    <ligand>
        <name>FMN</name>
        <dbReference type="ChEBI" id="CHEBI:58210"/>
    </ligand>
</feature>
<feature type="binding site" evidence="1">
    <location>
        <position position="147"/>
    </location>
    <ligand>
        <name>FMN</name>
        <dbReference type="ChEBI" id="CHEBI:58210"/>
    </ligand>
</feature>
<feature type="binding site" evidence="1">
    <location>
        <position position="180"/>
    </location>
    <ligand>
        <name>FMN</name>
        <dbReference type="ChEBI" id="CHEBI:58210"/>
    </ligand>
</feature>
<feature type="binding site" evidence="1">
    <location>
        <begin position="220"/>
        <end position="222"/>
    </location>
    <ligand>
        <name>FMN</name>
        <dbReference type="ChEBI" id="CHEBI:58210"/>
    </ligand>
</feature>
<feature type="binding site" evidence="1">
    <location>
        <begin position="242"/>
        <end position="243"/>
    </location>
    <ligand>
        <name>FMN</name>
        <dbReference type="ChEBI" id="CHEBI:58210"/>
    </ligand>
</feature>
<feature type="site" description="Interacts with tRNA" evidence="1">
    <location>
        <position position="105"/>
    </location>
</feature>
<feature type="site" description="Interacts with tRNA; defines subfamily-specific binding signature" evidence="1">
    <location>
        <position position="192"/>
    </location>
</feature>
<feature type="site" description="Interacts with tRNA" evidence="1">
    <location>
        <position position="195"/>
    </location>
</feature>
<feature type="site" description="Interacts with tRNA; defines subfamily-specific binding signature" evidence="1">
    <location>
        <position position="308"/>
    </location>
</feature>
<feature type="site" description="Interacts with tRNA; defines subfamily-specific binding signature" evidence="1">
    <location>
        <position position="311"/>
    </location>
</feature>
<accession>Q8ZJ14</accession>
<accession>Q0WJZ1</accession>
<keyword id="KW-0285">Flavoprotein</keyword>
<keyword id="KW-0288">FMN</keyword>
<keyword id="KW-0521">NADP</keyword>
<keyword id="KW-0560">Oxidoreductase</keyword>
<keyword id="KW-1185">Reference proteome</keyword>
<keyword id="KW-0694">RNA-binding</keyword>
<keyword id="KW-0819">tRNA processing</keyword>
<keyword id="KW-0820">tRNA-binding</keyword>
<evidence type="ECO:0000255" key="1">
    <source>
        <dbReference type="HAMAP-Rule" id="MF_02041"/>
    </source>
</evidence>
<proteinExistence type="inferred from homology"/>
<protein>
    <recommendedName>
        <fullName evidence="1">tRNA-dihydrouridine(20/20a) synthase</fullName>
        <ecNumber evidence="1">1.3.1.-</ecNumber>
        <ecNumber evidence="1">1.3.1.91</ecNumber>
    </recommendedName>
    <alternativeName>
        <fullName evidence="1">U20-specific dihydrouridine synthase</fullName>
        <shortName evidence="1">U20-specific Dus</shortName>
    </alternativeName>
    <alternativeName>
        <fullName evidence="1">tRNA-dihydrouridine synthase A</fullName>
    </alternativeName>
</protein>
<dbReference type="EC" id="1.3.1.-" evidence="1"/>
<dbReference type="EC" id="1.3.1.91" evidence="1"/>
<dbReference type="EMBL" id="AL590842">
    <property type="protein sequence ID" value="CAL19001.1"/>
    <property type="molecule type" value="Genomic_DNA"/>
</dbReference>
<dbReference type="EMBL" id="AE009952">
    <property type="protein sequence ID" value="AAM84162.1"/>
    <property type="molecule type" value="Genomic_DNA"/>
</dbReference>
<dbReference type="EMBL" id="AE017042">
    <property type="protein sequence ID" value="AAS60742.1"/>
    <property type="molecule type" value="Genomic_DNA"/>
</dbReference>
<dbReference type="PIR" id="AG0039">
    <property type="entry name" value="AG0039"/>
</dbReference>
<dbReference type="RefSeq" id="WP_002209092.1">
    <property type="nucleotide sequence ID" value="NZ_WUCM01000014.1"/>
</dbReference>
<dbReference type="RefSeq" id="YP_002345397.1">
    <property type="nucleotide sequence ID" value="NC_003143.1"/>
</dbReference>
<dbReference type="SMR" id="Q8ZJ14"/>
<dbReference type="STRING" id="214092.YPO0316"/>
<dbReference type="PaxDb" id="214092-YPO0316"/>
<dbReference type="DNASU" id="1145521"/>
<dbReference type="EnsemblBacteria" id="AAS60742">
    <property type="protein sequence ID" value="AAS60742"/>
    <property type="gene ID" value="YP_0472"/>
</dbReference>
<dbReference type="GeneID" id="57974288"/>
<dbReference type="KEGG" id="ype:YPO0316"/>
<dbReference type="KEGG" id="ypk:y0574"/>
<dbReference type="KEGG" id="ypm:YP_0472"/>
<dbReference type="PATRIC" id="fig|214092.21.peg.552"/>
<dbReference type="eggNOG" id="COG0042">
    <property type="taxonomic scope" value="Bacteria"/>
</dbReference>
<dbReference type="HOGENOM" id="CLU_013299_2_1_6"/>
<dbReference type="OMA" id="NNMIGAC"/>
<dbReference type="OrthoDB" id="9783413at2"/>
<dbReference type="Proteomes" id="UP000000815">
    <property type="component" value="Chromosome"/>
</dbReference>
<dbReference type="Proteomes" id="UP000001019">
    <property type="component" value="Chromosome"/>
</dbReference>
<dbReference type="Proteomes" id="UP000002490">
    <property type="component" value="Chromosome"/>
</dbReference>
<dbReference type="GO" id="GO:0050660">
    <property type="term" value="F:flavin adenine dinucleotide binding"/>
    <property type="evidence" value="ECO:0007669"/>
    <property type="project" value="InterPro"/>
</dbReference>
<dbReference type="GO" id="GO:0010181">
    <property type="term" value="F:FMN binding"/>
    <property type="evidence" value="ECO:0007669"/>
    <property type="project" value="UniProtKB-UniRule"/>
</dbReference>
<dbReference type="GO" id="GO:0000049">
    <property type="term" value="F:tRNA binding"/>
    <property type="evidence" value="ECO:0007669"/>
    <property type="project" value="UniProtKB-UniRule"/>
</dbReference>
<dbReference type="GO" id="GO:0102264">
    <property type="term" value="F:tRNA-dihydrouridine20 synthase activity"/>
    <property type="evidence" value="ECO:0007669"/>
    <property type="project" value="UniProtKB-EC"/>
</dbReference>
<dbReference type="GO" id="GO:0102266">
    <property type="term" value="F:tRNA-dihydrouridine20a synthase activity"/>
    <property type="evidence" value="ECO:0007669"/>
    <property type="project" value="RHEA"/>
</dbReference>
<dbReference type="CDD" id="cd02801">
    <property type="entry name" value="DUS_like_FMN"/>
    <property type="match status" value="1"/>
</dbReference>
<dbReference type="FunFam" id="1.20.120.1460:FF:000001">
    <property type="entry name" value="tRNA-dihydrouridine(20/20a) synthase"/>
    <property type="match status" value="1"/>
</dbReference>
<dbReference type="FunFam" id="3.20.20.70:FF:000083">
    <property type="entry name" value="tRNA-dihydrouridine(20/20a) synthase"/>
    <property type="match status" value="1"/>
</dbReference>
<dbReference type="Gene3D" id="1.20.120.1460">
    <property type="match status" value="1"/>
</dbReference>
<dbReference type="Gene3D" id="3.20.20.70">
    <property type="entry name" value="Aldolase class I"/>
    <property type="match status" value="1"/>
</dbReference>
<dbReference type="HAMAP" id="MF_02041">
    <property type="entry name" value="DusA_subfam"/>
    <property type="match status" value="1"/>
</dbReference>
<dbReference type="InterPro" id="IPR013785">
    <property type="entry name" value="Aldolase_TIM"/>
</dbReference>
<dbReference type="InterPro" id="IPR035587">
    <property type="entry name" value="DUS-like_FMN-bd"/>
</dbReference>
<dbReference type="InterPro" id="IPR001269">
    <property type="entry name" value="DUS_fam"/>
</dbReference>
<dbReference type="InterPro" id="IPR004653">
    <property type="entry name" value="DusA"/>
</dbReference>
<dbReference type="InterPro" id="IPR018517">
    <property type="entry name" value="tRNA_hU_synthase_CS"/>
</dbReference>
<dbReference type="NCBIfam" id="NF008774">
    <property type="entry name" value="PRK11815.1"/>
    <property type="match status" value="1"/>
</dbReference>
<dbReference type="NCBIfam" id="TIGR00742">
    <property type="entry name" value="yjbN"/>
    <property type="match status" value="1"/>
</dbReference>
<dbReference type="PANTHER" id="PTHR42907">
    <property type="entry name" value="FMN-LINKED OXIDOREDUCTASES SUPERFAMILY PROTEIN"/>
    <property type="match status" value="1"/>
</dbReference>
<dbReference type="PANTHER" id="PTHR42907:SF1">
    <property type="entry name" value="FMN-LINKED OXIDOREDUCTASES SUPERFAMILY PROTEIN"/>
    <property type="match status" value="1"/>
</dbReference>
<dbReference type="Pfam" id="PF01207">
    <property type="entry name" value="Dus"/>
    <property type="match status" value="1"/>
</dbReference>
<dbReference type="PIRSF" id="PIRSF006621">
    <property type="entry name" value="Dus"/>
    <property type="match status" value="1"/>
</dbReference>
<dbReference type="SUPFAM" id="SSF51395">
    <property type="entry name" value="FMN-linked oxidoreductases"/>
    <property type="match status" value="1"/>
</dbReference>
<dbReference type="PROSITE" id="PS01136">
    <property type="entry name" value="UPF0034"/>
    <property type="match status" value="1"/>
</dbReference>
<reference key="1">
    <citation type="journal article" date="2001" name="Nature">
        <title>Genome sequence of Yersinia pestis, the causative agent of plague.</title>
        <authorList>
            <person name="Parkhill J."/>
            <person name="Wren B.W."/>
            <person name="Thomson N.R."/>
            <person name="Titball R.W."/>
            <person name="Holden M.T.G."/>
            <person name="Prentice M.B."/>
            <person name="Sebaihia M."/>
            <person name="James K.D."/>
            <person name="Churcher C.M."/>
            <person name="Mungall K.L."/>
            <person name="Baker S."/>
            <person name="Basham D."/>
            <person name="Bentley S.D."/>
            <person name="Brooks K."/>
            <person name="Cerdeno-Tarraga A.-M."/>
            <person name="Chillingworth T."/>
            <person name="Cronin A."/>
            <person name="Davies R.M."/>
            <person name="Davis P."/>
            <person name="Dougan G."/>
            <person name="Feltwell T."/>
            <person name="Hamlin N."/>
            <person name="Holroyd S."/>
            <person name="Jagels K."/>
            <person name="Karlyshev A.V."/>
            <person name="Leather S."/>
            <person name="Moule S."/>
            <person name="Oyston P.C.F."/>
            <person name="Quail M.A."/>
            <person name="Rutherford K.M."/>
            <person name="Simmonds M."/>
            <person name="Skelton J."/>
            <person name="Stevens K."/>
            <person name="Whitehead S."/>
            <person name="Barrell B.G."/>
        </authorList>
    </citation>
    <scope>NUCLEOTIDE SEQUENCE [LARGE SCALE GENOMIC DNA]</scope>
    <source>
        <strain>CO-92 / Biovar Orientalis</strain>
    </source>
</reference>
<reference key="2">
    <citation type="journal article" date="2002" name="J. Bacteriol.">
        <title>Genome sequence of Yersinia pestis KIM.</title>
        <authorList>
            <person name="Deng W."/>
            <person name="Burland V."/>
            <person name="Plunkett G. III"/>
            <person name="Boutin A."/>
            <person name="Mayhew G.F."/>
            <person name="Liss P."/>
            <person name="Perna N.T."/>
            <person name="Rose D.J."/>
            <person name="Mau B."/>
            <person name="Zhou S."/>
            <person name="Schwartz D.C."/>
            <person name="Fetherston J.D."/>
            <person name="Lindler L.E."/>
            <person name="Brubaker R.R."/>
            <person name="Plano G.V."/>
            <person name="Straley S.C."/>
            <person name="McDonough K.A."/>
            <person name="Nilles M.L."/>
            <person name="Matson J.S."/>
            <person name="Blattner F.R."/>
            <person name="Perry R.D."/>
        </authorList>
    </citation>
    <scope>NUCLEOTIDE SEQUENCE [LARGE SCALE GENOMIC DNA]</scope>
    <source>
        <strain>KIM10+ / Biovar Mediaevalis</strain>
    </source>
</reference>
<reference key="3">
    <citation type="journal article" date="2004" name="DNA Res.">
        <title>Complete genome sequence of Yersinia pestis strain 91001, an isolate avirulent to humans.</title>
        <authorList>
            <person name="Song Y."/>
            <person name="Tong Z."/>
            <person name="Wang J."/>
            <person name="Wang L."/>
            <person name="Guo Z."/>
            <person name="Han Y."/>
            <person name="Zhang J."/>
            <person name="Pei D."/>
            <person name="Zhou D."/>
            <person name="Qin H."/>
            <person name="Pang X."/>
            <person name="Han Y."/>
            <person name="Zhai J."/>
            <person name="Li M."/>
            <person name="Cui B."/>
            <person name="Qi Z."/>
            <person name="Jin L."/>
            <person name="Dai R."/>
            <person name="Chen F."/>
            <person name="Li S."/>
            <person name="Ye C."/>
            <person name="Du Z."/>
            <person name="Lin W."/>
            <person name="Wang J."/>
            <person name="Yu J."/>
            <person name="Yang H."/>
            <person name="Wang J."/>
            <person name="Huang P."/>
            <person name="Yang R."/>
        </authorList>
    </citation>
    <scope>NUCLEOTIDE SEQUENCE [LARGE SCALE GENOMIC DNA]</scope>
    <source>
        <strain>91001 / Biovar Mediaevalis</strain>
    </source>
</reference>
<sequence length="345" mass="38333">MHEAQTFSSTPATKPQYPLQRFSVAPMLDWTDRHCRYFHRLLTKQALLYTEMVTTGAIIHGKADYLAYSEQDHPVALQLGGSDPQALAHCAKLAEQRGYNEINLNVGCPSDRVQNGRFGACLMGEADLVADCIKAMRDAVAIPVTVKTRIGIDQLDSYEFLCEFVQTVAERGECEIFTIHARKAWLSGLSPKENREVPPLDYERVYQLKRDFPALTIAINGGVKTLAEAKEHLKHLDGVMMGREAYQNPGILTQVDRELFDPNAPVVDSVKAIEALYPYIEQELSQGAYLGHITRHILGIFQGIPGARQWRRHLSENAHKPGAGVSVVEEALALVSPSYYESVGG</sequence>
<organism>
    <name type="scientific">Yersinia pestis</name>
    <dbReference type="NCBI Taxonomy" id="632"/>
    <lineage>
        <taxon>Bacteria</taxon>
        <taxon>Pseudomonadati</taxon>
        <taxon>Pseudomonadota</taxon>
        <taxon>Gammaproteobacteria</taxon>
        <taxon>Enterobacterales</taxon>
        <taxon>Yersiniaceae</taxon>
        <taxon>Yersinia</taxon>
    </lineage>
</organism>
<gene>
    <name evidence="1" type="primary">dusA</name>
    <name type="ordered locus">YPO0316</name>
    <name type="ordered locus">y0574</name>
    <name type="ordered locus">YP_0472</name>
</gene>